<organism>
    <name type="scientific">Teredinibacter turnerae (strain ATCC 39867 / T7901)</name>
    <dbReference type="NCBI Taxonomy" id="377629"/>
    <lineage>
        <taxon>Bacteria</taxon>
        <taxon>Pseudomonadati</taxon>
        <taxon>Pseudomonadota</taxon>
        <taxon>Gammaproteobacteria</taxon>
        <taxon>Cellvibrionales</taxon>
        <taxon>Cellvibrionaceae</taxon>
        <taxon>Teredinibacter</taxon>
    </lineage>
</organism>
<protein>
    <recommendedName>
        <fullName evidence="1">LexA repressor</fullName>
        <ecNumber evidence="1">3.4.21.88</ecNumber>
    </recommendedName>
</protein>
<reference key="1">
    <citation type="journal article" date="2009" name="PLoS ONE">
        <title>The complete genome of Teredinibacter turnerae T7901: an intracellular endosymbiont of marine wood-boring bivalves (shipworms).</title>
        <authorList>
            <person name="Yang J.C."/>
            <person name="Madupu R."/>
            <person name="Durkin A.S."/>
            <person name="Ekborg N.A."/>
            <person name="Pedamallu C.S."/>
            <person name="Hostetler J.B."/>
            <person name="Radune D."/>
            <person name="Toms B.S."/>
            <person name="Henrissat B."/>
            <person name="Coutinho P.M."/>
            <person name="Schwarz S."/>
            <person name="Field L."/>
            <person name="Trindade-Silva A.E."/>
            <person name="Soares C.A.G."/>
            <person name="Elshahawi S."/>
            <person name="Hanora A."/>
            <person name="Schmidt E.W."/>
            <person name="Haygood M.G."/>
            <person name="Posfai J."/>
            <person name="Benner J."/>
            <person name="Madinger C."/>
            <person name="Nove J."/>
            <person name="Anton B."/>
            <person name="Chaudhary K."/>
            <person name="Foster J."/>
            <person name="Holman A."/>
            <person name="Kumar S."/>
            <person name="Lessard P.A."/>
            <person name="Luyten Y.A."/>
            <person name="Slatko B."/>
            <person name="Wood N."/>
            <person name="Wu B."/>
            <person name="Teplitski M."/>
            <person name="Mougous J.D."/>
            <person name="Ward N."/>
            <person name="Eisen J.A."/>
            <person name="Badger J.H."/>
            <person name="Distel D.L."/>
        </authorList>
    </citation>
    <scope>NUCLEOTIDE SEQUENCE [LARGE SCALE GENOMIC DNA]</scope>
    <source>
        <strain>ATCC 39867 / T7901</strain>
    </source>
</reference>
<proteinExistence type="inferred from homology"/>
<keyword id="KW-0068">Autocatalytic cleavage</keyword>
<keyword id="KW-0227">DNA damage</keyword>
<keyword id="KW-0234">DNA repair</keyword>
<keyword id="KW-0235">DNA replication</keyword>
<keyword id="KW-0238">DNA-binding</keyword>
<keyword id="KW-0378">Hydrolase</keyword>
<keyword id="KW-1185">Reference proteome</keyword>
<keyword id="KW-0678">Repressor</keyword>
<keyword id="KW-0742">SOS response</keyword>
<keyword id="KW-0804">Transcription</keyword>
<keyword id="KW-0805">Transcription regulation</keyword>
<sequence>MIKLTARQQQILDLIRDHIAETGYPPTRAEIAEILGFKSANAAEEHLKALARKGAIEMIAGASRGIRLPEVQSGIPLVGRVAAGSPILAQEHIEDYCDIPHNFFSPKADFLLTVHGMSMKDIGILDGDLLAVHKTDQVRNGDIVVARIDNEVTVKRFKRERNRAQVELWPENPDFNVIEVDLRDANFAIEGLSVGVIRRS</sequence>
<dbReference type="EC" id="3.4.21.88" evidence="1"/>
<dbReference type="EMBL" id="CP001614">
    <property type="protein sequence ID" value="ACR12804.1"/>
    <property type="molecule type" value="Genomic_DNA"/>
</dbReference>
<dbReference type="RefSeq" id="WP_015818916.1">
    <property type="nucleotide sequence ID" value="NC_012997.1"/>
</dbReference>
<dbReference type="SMR" id="C5BIH2"/>
<dbReference type="STRING" id="377629.TERTU_1938"/>
<dbReference type="MEROPS" id="S24.001"/>
<dbReference type="KEGG" id="ttu:TERTU_1938"/>
<dbReference type="eggNOG" id="COG1974">
    <property type="taxonomic scope" value="Bacteria"/>
</dbReference>
<dbReference type="HOGENOM" id="CLU_066192_45_3_6"/>
<dbReference type="OrthoDB" id="9802364at2"/>
<dbReference type="Proteomes" id="UP000009080">
    <property type="component" value="Chromosome"/>
</dbReference>
<dbReference type="GO" id="GO:0003677">
    <property type="term" value="F:DNA binding"/>
    <property type="evidence" value="ECO:0007669"/>
    <property type="project" value="UniProtKB-UniRule"/>
</dbReference>
<dbReference type="GO" id="GO:0004252">
    <property type="term" value="F:serine-type endopeptidase activity"/>
    <property type="evidence" value="ECO:0007669"/>
    <property type="project" value="UniProtKB-UniRule"/>
</dbReference>
<dbReference type="GO" id="GO:0006281">
    <property type="term" value="P:DNA repair"/>
    <property type="evidence" value="ECO:0007669"/>
    <property type="project" value="UniProtKB-UniRule"/>
</dbReference>
<dbReference type="GO" id="GO:0006260">
    <property type="term" value="P:DNA replication"/>
    <property type="evidence" value="ECO:0007669"/>
    <property type="project" value="UniProtKB-UniRule"/>
</dbReference>
<dbReference type="GO" id="GO:0045892">
    <property type="term" value="P:negative regulation of DNA-templated transcription"/>
    <property type="evidence" value="ECO:0007669"/>
    <property type="project" value="UniProtKB-UniRule"/>
</dbReference>
<dbReference type="GO" id="GO:0006508">
    <property type="term" value="P:proteolysis"/>
    <property type="evidence" value="ECO:0007669"/>
    <property type="project" value="InterPro"/>
</dbReference>
<dbReference type="GO" id="GO:0009432">
    <property type="term" value="P:SOS response"/>
    <property type="evidence" value="ECO:0007669"/>
    <property type="project" value="UniProtKB-UniRule"/>
</dbReference>
<dbReference type="CDD" id="cd06529">
    <property type="entry name" value="S24_LexA-like"/>
    <property type="match status" value="1"/>
</dbReference>
<dbReference type="FunFam" id="1.10.10.10:FF:000009">
    <property type="entry name" value="LexA repressor"/>
    <property type="match status" value="1"/>
</dbReference>
<dbReference type="FunFam" id="2.10.109.10:FF:000001">
    <property type="entry name" value="LexA repressor"/>
    <property type="match status" value="1"/>
</dbReference>
<dbReference type="Gene3D" id="2.10.109.10">
    <property type="entry name" value="Umud Fragment, subunit A"/>
    <property type="match status" value="1"/>
</dbReference>
<dbReference type="Gene3D" id="1.10.10.10">
    <property type="entry name" value="Winged helix-like DNA-binding domain superfamily/Winged helix DNA-binding domain"/>
    <property type="match status" value="1"/>
</dbReference>
<dbReference type="HAMAP" id="MF_00015">
    <property type="entry name" value="LexA"/>
    <property type="match status" value="1"/>
</dbReference>
<dbReference type="InterPro" id="IPR006200">
    <property type="entry name" value="LexA"/>
</dbReference>
<dbReference type="InterPro" id="IPR039418">
    <property type="entry name" value="LexA-like"/>
</dbReference>
<dbReference type="InterPro" id="IPR036286">
    <property type="entry name" value="LexA/Signal_pep-like_sf"/>
</dbReference>
<dbReference type="InterPro" id="IPR006199">
    <property type="entry name" value="LexA_DNA-bd_dom"/>
</dbReference>
<dbReference type="InterPro" id="IPR050077">
    <property type="entry name" value="LexA_repressor"/>
</dbReference>
<dbReference type="InterPro" id="IPR006197">
    <property type="entry name" value="Peptidase_S24_LexA"/>
</dbReference>
<dbReference type="InterPro" id="IPR015927">
    <property type="entry name" value="Peptidase_S24_S26A/B/C"/>
</dbReference>
<dbReference type="InterPro" id="IPR036388">
    <property type="entry name" value="WH-like_DNA-bd_sf"/>
</dbReference>
<dbReference type="InterPro" id="IPR036390">
    <property type="entry name" value="WH_DNA-bd_sf"/>
</dbReference>
<dbReference type="NCBIfam" id="TIGR00498">
    <property type="entry name" value="lexA"/>
    <property type="match status" value="1"/>
</dbReference>
<dbReference type="PANTHER" id="PTHR33516">
    <property type="entry name" value="LEXA REPRESSOR"/>
    <property type="match status" value="1"/>
</dbReference>
<dbReference type="PANTHER" id="PTHR33516:SF2">
    <property type="entry name" value="LEXA REPRESSOR-RELATED"/>
    <property type="match status" value="1"/>
</dbReference>
<dbReference type="Pfam" id="PF01726">
    <property type="entry name" value="LexA_DNA_bind"/>
    <property type="match status" value="1"/>
</dbReference>
<dbReference type="Pfam" id="PF00717">
    <property type="entry name" value="Peptidase_S24"/>
    <property type="match status" value="1"/>
</dbReference>
<dbReference type="PRINTS" id="PR00726">
    <property type="entry name" value="LEXASERPTASE"/>
</dbReference>
<dbReference type="SUPFAM" id="SSF51306">
    <property type="entry name" value="LexA/Signal peptidase"/>
    <property type="match status" value="1"/>
</dbReference>
<dbReference type="SUPFAM" id="SSF46785">
    <property type="entry name" value="Winged helix' DNA-binding domain"/>
    <property type="match status" value="1"/>
</dbReference>
<name>LEXA_TERTT</name>
<accession>C5BIH2</accession>
<evidence type="ECO:0000255" key="1">
    <source>
        <dbReference type="HAMAP-Rule" id="MF_00015"/>
    </source>
</evidence>
<comment type="function">
    <text evidence="1">Represses a number of genes involved in the response to DNA damage (SOS response), including recA and lexA. In the presence of single-stranded DNA, RecA interacts with LexA causing an autocatalytic cleavage which disrupts the DNA-binding part of LexA, leading to derepression of the SOS regulon and eventually DNA repair.</text>
</comment>
<comment type="catalytic activity">
    <reaction evidence="1">
        <text>Hydrolysis of Ala-|-Gly bond in repressor LexA.</text>
        <dbReference type="EC" id="3.4.21.88"/>
    </reaction>
</comment>
<comment type="subunit">
    <text evidence="1">Homodimer.</text>
</comment>
<comment type="similarity">
    <text evidence="1">Belongs to the peptidase S24 family.</text>
</comment>
<feature type="chain" id="PRO_1000201826" description="LexA repressor">
    <location>
        <begin position="1"/>
        <end position="200"/>
    </location>
</feature>
<feature type="DNA-binding region" description="H-T-H motif" evidence="1">
    <location>
        <begin position="28"/>
        <end position="48"/>
    </location>
</feature>
<feature type="active site" description="For autocatalytic cleavage activity" evidence="1">
    <location>
        <position position="118"/>
    </location>
</feature>
<feature type="active site" description="For autocatalytic cleavage activity" evidence="1">
    <location>
        <position position="155"/>
    </location>
</feature>
<feature type="site" description="Cleavage; by autolysis" evidence="1">
    <location>
        <begin position="83"/>
        <end position="84"/>
    </location>
</feature>
<gene>
    <name evidence="1" type="primary">lexA</name>
    <name type="ordered locus">TERTU_1938</name>
</gene>